<comment type="function">
    <text>May be involved in transcriptional regulation.</text>
</comment>
<comment type="subcellular location">
    <subcellularLocation>
        <location evidence="4">Nucleus</location>
    </subcellularLocation>
</comment>
<comment type="alternative products">
    <event type="alternative splicing"/>
    <isoform>
        <id>Q5EBM4-1</id>
        <name>1</name>
        <sequence type="displayed"/>
    </isoform>
    <isoform>
        <id>Q5EBM4-2</id>
        <name>2</name>
        <sequence type="described" ref="VSP_055414"/>
    </isoform>
</comment>
<comment type="similarity">
    <text evidence="4">Belongs to the krueppel C2H2-type zinc-finger protein family.</text>
</comment>
<comment type="caution">
    <text evidence="4">Could be the product of a pseudogene.</text>
</comment>
<comment type="sequence caution" evidence="4">
    <conflict type="erroneous translation">
        <sequence resource="EMBL-CDS" id="BAG53424"/>
    </conflict>
    <text>Wrong choice of CDS.</text>
</comment>
<comment type="sequence caution" evidence="4">
    <conflict type="erroneous translation">
        <sequence resource="EMBL-CDS" id="CAE45809"/>
    </conflict>
    <text>Wrong choice of CDS.</text>
</comment>
<name>ZN542_HUMAN</name>
<keyword id="KW-0025">Alternative splicing</keyword>
<keyword id="KW-0238">DNA-binding</keyword>
<keyword id="KW-0479">Metal-binding</keyword>
<keyword id="KW-0539">Nucleus</keyword>
<keyword id="KW-1185">Reference proteome</keyword>
<keyword id="KW-0677">Repeat</keyword>
<keyword id="KW-0804">Transcription</keyword>
<keyword id="KW-0805">Transcription regulation</keyword>
<keyword id="KW-0862">Zinc</keyword>
<keyword id="KW-0863">Zinc-finger</keyword>
<organism>
    <name type="scientific">Homo sapiens</name>
    <name type="common">Human</name>
    <dbReference type="NCBI Taxonomy" id="9606"/>
    <lineage>
        <taxon>Eukaryota</taxon>
        <taxon>Metazoa</taxon>
        <taxon>Chordata</taxon>
        <taxon>Craniata</taxon>
        <taxon>Vertebrata</taxon>
        <taxon>Euteleostomi</taxon>
        <taxon>Mammalia</taxon>
        <taxon>Eutheria</taxon>
        <taxon>Euarchontoglires</taxon>
        <taxon>Primates</taxon>
        <taxon>Haplorrhini</taxon>
        <taxon>Catarrhini</taxon>
        <taxon>Hominidae</taxon>
        <taxon>Homo</taxon>
    </lineage>
</organism>
<evidence type="ECO:0000255" key="1">
    <source>
        <dbReference type="PROSITE-ProRule" id="PRU00042"/>
    </source>
</evidence>
<evidence type="ECO:0000255" key="2">
    <source>
        <dbReference type="PROSITE-ProRule" id="PRU00119"/>
    </source>
</evidence>
<evidence type="ECO:0000303" key="3">
    <source>
    </source>
</evidence>
<evidence type="ECO:0000305" key="4"/>
<proteinExistence type="uncertain"/>
<gene>
    <name type="primary">ZNF542P</name>
    <name type="synonym">ZNF542</name>
</gene>
<accession>Q5EBM4</accession>
<accession>B3KUG2</accession>
<accession>B4DLV1</accession>
<accession>Q6N061</accession>
<sequence>MLENYQNLVWLGLSISKSVISLLEKRKLPWIMAKEEIRGPLPGYFKVSEMTISQEPKAKTRTLFGKDVPGAEIKELSAKRAINEVLSQFDTVIKCTRNVCKECGNLYCHNMQLTLHKRNHTQKKCNQCLDCGKYFTRQSTLIQHQRIHTGERPYKCNECIKTFNQRAHLT</sequence>
<protein>
    <recommendedName>
        <fullName>Putative zinc finger protein 542</fullName>
    </recommendedName>
    <alternativeName>
        <fullName>Zinc finger protein 542 pseudogene</fullName>
    </alternativeName>
</protein>
<feature type="chain" id="PRO_0000234581" description="Putative zinc finger protein 542">
    <location>
        <begin position="1"/>
        <end position="170"/>
    </location>
</feature>
<feature type="domain" description="KRAB" evidence="2">
    <location>
        <begin position="1"/>
        <end position="42"/>
    </location>
</feature>
<feature type="zinc finger region" description="C2H2-type 1" evidence="1">
    <location>
        <begin position="98"/>
        <end position="120"/>
    </location>
</feature>
<feature type="zinc finger region" description="C2H2-type 2" evidence="1">
    <location>
        <begin position="126"/>
        <end position="148"/>
    </location>
</feature>
<feature type="zinc finger region" description="C2H2-type 3; degenerate" evidence="1">
    <location>
        <begin position="154"/>
        <end position="170"/>
    </location>
</feature>
<feature type="splice variant" id="VSP_055414" description="In isoform 2." evidence="3">
    <location>
        <begin position="43"/>
        <end position="66"/>
    </location>
</feature>
<feature type="sequence conflict" description="In Ref. 2; BAG53424." evidence="4" ref="2">
    <original>Y</original>
    <variation>H</variation>
    <location>
        <position position="5"/>
    </location>
</feature>
<feature type="sequence conflict" description="In Ref. 2; CAE45809." evidence="4" ref="2">
    <original>K</original>
    <variation>R</variation>
    <location>
        <position position="74"/>
    </location>
</feature>
<dbReference type="EMBL" id="AK097128">
    <property type="protein sequence ID" value="BAG53424.1"/>
    <property type="status" value="ALT_SEQ"/>
    <property type="molecule type" value="mRNA"/>
</dbReference>
<dbReference type="EMBL" id="AK297170">
    <property type="protein sequence ID" value="BAG59663.1"/>
    <property type="molecule type" value="mRNA"/>
</dbReference>
<dbReference type="EMBL" id="BX640680">
    <property type="protein sequence ID" value="CAE45809.1"/>
    <property type="status" value="ALT_SEQ"/>
    <property type="molecule type" value="mRNA"/>
</dbReference>
<dbReference type="EMBL" id="AC006116">
    <property type="status" value="NOT_ANNOTATED_CDS"/>
    <property type="molecule type" value="Genomic_DNA"/>
</dbReference>
<dbReference type="EMBL" id="CH471135">
    <property type="protein sequence ID" value="EAW72442.1"/>
    <property type="molecule type" value="Genomic_DNA"/>
</dbReference>
<dbReference type="SMR" id="Q5EBM4"/>
<dbReference type="FunCoup" id="Q5EBM4">
    <property type="interactions" value="142"/>
</dbReference>
<dbReference type="iPTMnet" id="Q5EBM4"/>
<dbReference type="PhosphoSitePlus" id="Q5EBM4"/>
<dbReference type="BioMuta" id="HGNC:25393"/>
<dbReference type="DMDM" id="259016453"/>
<dbReference type="jPOST" id="Q5EBM4"/>
<dbReference type="MassIVE" id="Q5EBM4"/>
<dbReference type="PeptideAtlas" id="Q5EBM4"/>
<dbReference type="AGR" id="HGNC:25393"/>
<dbReference type="GeneCards" id="ZNF542P"/>
<dbReference type="HGNC" id="HGNC:25393">
    <property type="gene designation" value="ZNF542P"/>
</dbReference>
<dbReference type="neXtProt" id="NX_Q5EBM4"/>
<dbReference type="InParanoid" id="Q5EBM4"/>
<dbReference type="PAN-GO" id="Q5EBM4">
    <property type="GO annotations" value="4 GO annotations based on evolutionary models"/>
</dbReference>
<dbReference type="PhylomeDB" id="Q5EBM4"/>
<dbReference type="ChiTaRS" id="ZNF542P">
    <property type="organism name" value="human"/>
</dbReference>
<dbReference type="Pharos" id="Q5EBM4">
    <property type="development level" value="Tdark"/>
</dbReference>
<dbReference type="PRO" id="PR:Q5EBM4"/>
<dbReference type="Proteomes" id="UP000005640">
    <property type="component" value="Unplaced"/>
</dbReference>
<dbReference type="RNAct" id="Q5EBM4">
    <property type="molecule type" value="protein"/>
</dbReference>
<dbReference type="GO" id="GO:0005634">
    <property type="term" value="C:nucleus"/>
    <property type="evidence" value="ECO:0007669"/>
    <property type="project" value="UniProtKB-SubCell"/>
</dbReference>
<dbReference type="GO" id="GO:0003677">
    <property type="term" value="F:DNA binding"/>
    <property type="evidence" value="ECO:0007669"/>
    <property type="project" value="UniProtKB-KW"/>
</dbReference>
<dbReference type="GO" id="GO:0003700">
    <property type="term" value="F:DNA-binding transcription factor activity"/>
    <property type="evidence" value="ECO:0000303"/>
    <property type="project" value="ARUK-UCL"/>
</dbReference>
<dbReference type="GO" id="GO:0008270">
    <property type="term" value="F:zinc ion binding"/>
    <property type="evidence" value="ECO:0007669"/>
    <property type="project" value="UniProtKB-KW"/>
</dbReference>
<dbReference type="FunFam" id="3.30.160.60:FF:000478">
    <property type="entry name" value="Zinc finger protein 133"/>
    <property type="match status" value="1"/>
</dbReference>
<dbReference type="FunFam" id="3.30.160.60:FF:000176">
    <property type="entry name" value="zinc finger protein 70"/>
    <property type="match status" value="1"/>
</dbReference>
<dbReference type="Gene3D" id="3.30.160.60">
    <property type="entry name" value="Classic Zinc Finger"/>
    <property type="match status" value="2"/>
</dbReference>
<dbReference type="InterPro" id="IPR001909">
    <property type="entry name" value="KRAB"/>
</dbReference>
<dbReference type="InterPro" id="IPR036236">
    <property type="entry name" value="Znf_C2H2_sf"/>
</dbReference>
<dbReference type="InterPro" id="IPR013087">
    <property type="entry name" value="Znf_C2H2_type"/>
</dbReference>
<dbReference type="PANTHER" id="PTHR24381:SF393">
    <property type="entry name" value="CHROMATIN-LINKED ADAPTOR FOR MSL PROTEINS, ISOFORM B"/>
    <property type="match status" value="1"/>
</dbReference>
<dbReference type="PANTHER" id="PTHR24381">
    <property type="entry name" value="ZINC FINGER PROTEIN"/>
    <property type="match status" value="1"/>
</dbReference>
<dbReference type="Pfam" id="PF00096">
    <property type="entry name" value="zf-C2H2"/>
    <property type="match status" value="1"/>
</dbReference>
<dbReference type="SMART" id="SM00355">
    <property type="entry name" value="ZnF_C2H2"/>
    <property type="match status" value="2"/>
</dbReference>
<dbReference type="SUPFAM" id="SSF57667">
    <property type="entry name" value="beta-beta-alpha zinc fingers"/>
    <property type="match status" value="1"/>
</dbReference>
<dbReference type="PROSITE" id="PS50805">
    <property type="entry name" value="KRAB"/>
    <property type="match status" value="1"/>
</dbReference>
<dbReference type="PROSITE" id="PS00028">
    <property type="entry name" value="ZINC_FINGER_C2H2_1"/>
    <property type="match status" value="2"/>
</dbReference>
<dbReference type="PROSITE" id="PS50157">
    <property type="entry name" value="ZINC_FINGER_C2H2_2"/>
    <property type="match status" value="3"/>
</dbReference>
<reference key="1">
    <citation type="journal article" date="2004" name="Nat. Genet.">
        <title>Complete sequencing and characterization of 21,243 full-length human cDNAs.</title>
        <authorList>
            <person name="Ota T."/>
            <person name="Suzuki Y."/>
            <person name="Nishikawa T."/>
            <person name="Otsuki T."/>
            <person name="Sugiyama T."/>
            <person name="Irie R."/>
            <person name="Wakamatsu A."/>
            <person name="Hayashi K."/>
            <person name="Sato H."/>
            <person name="Nagai K."/>
            <person name="Kimura K."/>
            <person name="Makita H."/>
            <person name="Sekine M."/>
            <person name="Obayashi M."/>
            <person name="Nishi T."/>
            <person name="Shibahara T."/>
            <person name="Tanaka T."/>
            <person name="Ishii S."/>
            <person name="Yamamoto J."/>
            <person name="Saito K."/>
            <person name="Kawai Y."/>
            <person name="Isono Y."/>
            <person name="Nakamura Y."/>
            <person name="Nagahari K."/>
            <person name="Murakami K."/>
            <person name="Yasuda T."/>
            <person name="Iwayanagi T."/>
            <person name="Wagatsuma M."/>
            <person name="Shiratori A."/>
            <person name="Sudo H."/>
            <person name="Hosoiri T."/>
            <person name="Kaku Y."/>
            <person name="Kodaira H."/>
            <person name="Kondo H."/>
            <person name="Sugawara M."/>
            <person name="Takahashi M."/>
            <person name="Kanda K."/>
            <person name="Yokoi T."/>
            <person name="Furuya T."/>
            <person name="Kikkawa E."/>
            <person name="Omura Y."/>
            <person name="Abe K."/>
            <person name="Kamihara K."/>
            <person name="Katsuta N."/>
            <person name="Sato K."/>
            <person name="Tanikawa M."/>
            <person name="Yamazaki M."/>
            <person name="Ninomiya K."/>
            <person name="Ishibashi T."/>
            <person name="Yamashita H."/>
            <person name="Murakawa K."/>
            <person name="Fujimori K."/>
            <person name="Tanai H."/>
            <person name="Kimata M."/>
            <person name="Watanabe M."/>
            <person name="Hiraoka S."/>
            <person name="Chiba Y."/>
            <person name="Ishida S."/>
            <person name="Ono Y."/>
            <person name="Takiguchi S."/>
            <person name="Watanabe S."/>
            <person name="Yosida M."/>
            <person name="Hotuta T."/>
            <person name="Kusano J."/>
            <person name="Kanehori K."/>
            <person name="Takahashi-Fujii A."/>
            <person name="Hara H."/>
            <person name="Tanase T.-O."/>
            <person name="Nomura Y."/>
            <person name="Togiya S."/>
            <person name="Komai F."/>
            <person name="Hara R."/>
            <person name="Takeuchi K."/>
            <person name="Arita M."/>
            <person name="Imose N."/>
            <person name="Musashino K."/>
            <person name="Yuuki H."/>
            <person name="Oshima A."/>
            <person name="Sasaki N."/>
            <person name="Aotsuka S."/>
            <person name="Yoshikawa Y."/>
            <person name="Matsunawa H."/>
            <person name="Ichihara T."/>
            <person name="Shiohata N."/>
            <person name="Sano S."/>
            <person name="Moriya S."/>
            <person name="Momiyama H."/>
            <person name="Satoh N."/>
            <person name="Takami S."/>
            <person name="Terashima Y."/>
            <person name="Suzuki O."/>
            <person name="Nakagawa S."/>
            <person name="Senoh A."/>
            <person name="Mizoguchi H."/>
            <person name="Goto Y."/>
            <person name="Shimizu F."/>
            <person name="Wakebe H."/>
            <person name="Hishigaki H."/>
            <person name="Watanabe T."/>
            <person name="Sugiyama A."/>
            <person name="Takemoto M."/>
            <person name="Kawakami B."/>
            <person name="Yamazaki M."/>
            <person name="Watanabe K."/>
            <person name="Kumagai A."/>
            <person name="Itakura S."/>
            <person name="Fukuzumi Y."/>
            <person name="Fujimori Y."/>
            <person name="Komiyama M."/>
            <person name="Tashiro H."/>
            <person name="Tanigami A."/>
            <person name="Fujiwara T."/>
            <person name="Ono T."/>
            <person name="Yamada K."/>
            <person name="Fujii Y."/>
            <person name="Ozaki K."/>
            <person name="Hirao M."/>
            <person name="Ohmori Y."/>
            <person name="Kawabata A."/>
            <person name="Hikiji T."/>
            <person name="Kobatake N."/>
            <person name="Inagaki H."/>
            <person name="Ikema Y."/>
            <person name="Okamoto S."/>
            <person name="Okitani R."/>
            <person name="Kawakami T."/>
            <person name="Noguchi S."/>
            <person name="Itoh T."/>
            <person name="Shigeta K."/>
            <person name="Senba T."/>
            <person name="Matsumura K."/>
            <person name="Nakajima Y."/>
            <person name="Mizuno T."/>
            <person name="Morinaga M."/>
            <person name="Sasaki M."/>
            <person name="Togashi T."/>
            <person name="Oyama M."/>
            <person name="Hata H."/>
            <person name="Watanabe M."/>
            <person name="Komatsu T."/>
            <person name="Mizushima-Sugano J."/>
            <person name="Satoh T."/>
            <person name="Shirai Y."/>
            <person name="Takahashi Y."/>
            <person name="Nakagawa K."/>
            <person name="Okumura K."/>
            <person name="Nagase T."/>
            <person name="Nomura N."/>
            <person name="Kikuchi H."/>
            <person name="Masuho Y."/>
            <person name="Yamashita R."/>
            <person name="Nakai K."/>
            <person name="Yada T."/>
            <person name="Nakamura Y."/>
            <person name="Ohara O."/>
            <person name="Isogai T."/>
            <person name="Sugano S."/>
        </authorList>
    </citation>
    <scope>NUCLEOTIDE SEQUENCE [LARGE SCALE MRNA] (ISOFORMS 1 AND 2)</scope>
    <source>
        <tissue>Fetal brain</tissue>
        <tissue>Spleen</tissue>
    </source>
</reference>
<reference key="2">
    <citation type="journal article" date="2007" name="BMC Genomics">
        <title>The full-ORF clone resource of the German cDNA consortium.</title>
        <authorList>
            <person name="Bechtel S."/>
            <person name="Rosenfelder H."/>
            <person name="Duda A."/>
            <person name="Schmidt C.P."/>
            <person name="Ernst U."/>
            <person name="Wellenreuther R."/>
            <person name="Mehrle A."/>
            <person name="Schuster C."/>
            <person name="Bahr A."/>
            <person name="Bloecker H."/>
            <person name="Heubner D."/>
            <person name="Hoerlein A."/>
            <person name="Michel G."/>
            <person name="Wedler H."/>
            <person name="Koehrer K."/>
            <person name="Ottenwaelder B."/>
            <person name="Poustka A."/>
            <person name="Wiemann S."/>
            <person name="Schupp I."/>
        </authorList>
    </citation>
    <scope>NUCLEOTIDE SEQUENCE [LARGE SCALE MRNA] (ISOFORM 1)</scope>
    <source>
        <tissue>Retina</tissue>
    </source>
</reference>
<reference key="3">
    <citation type="journal article" date="2004" name="Nature">
        <title>The DNA sequence and biology of human chromosome 19.</title>
        <authorList>
            <person name="Grimwood J."/>
            <person name="Gordon L.A."/>
            <person name="Olsen A.S."/>
            <person name="Terry A."/>
            <person name="Schmutz J."/>
            <person name="Lamerdin J.E."/>
            <person name="Hellsten U."/>
            <person name="Goodstein D."/>
            <person name="Couronne O."/>
            <person name="Tran-Gyamfi M."/>
            <person name="Aerts A."/>
            <person name="Altherr M."/>
            <person name="Ashworth L."/>
            <person name="Bajorek E."/>
            <person name="Black S."/>
            <person name="Branscomb E."/>
            <person name="Caenepeel S."/>
            <person name="Carrano A.V."/>
            <person name="Caoile C."/>
            <person name="Chan Y.M."/>
            <person name="Christensen M."/>
            <person name="Cleland C.A."/>
            <person name="Copeland A."/>
            <person name="Dalin E."/>
            <person name="Dehal P."/>
            <person name="Denys M."/>
            <person name="Detter J.C."/>
            <person name="Escobar J."/>
            <person name="Flowers D."/>
            <person name="Fotopulos D."/>
            <person name="Garcia C."/>
            <person name="Georgescu A.M."/>
            <person name="Glavina T."/>
            <person name="Gomez M."/>
            <person name="Gonzales E."/>
            <person name="Groza M."/>
            <person name="Hammon N."/>
            <person name="Hawkins T."/>
            <person name="Haydu L."/>
            <person name="Ho I."/>
            <person name="Huang W."/>
            <person name="Israni S."/>
            <person name="Jett J."/>
            <person name="Kadner K."/>
            <person name="Kimball H."/>
            <person name="Kobayashi A."/>
            <person name="Larionov V."/>
            <person name="Leem S.-H."/>
            <person name="Lopez F."/>
            <person name="Lou Y."/>
            <person name="Lowry S."/>
            <person name="Malfatti S."/>
            <person name="Martinez D."/>
            <person name="McCready P.M."/>
            <person name="Medina C."/>
            <person name="Morgan J."/>
            <person name="Nelson K."/>
            <person name="Nolan M."/>
            <person name="Ovcharenko I."/>
            <person name="Pitluck S."/>
            <person name="Pollard M."/>
            <person name="Popkie A.P."/>
            <person name="Predki P."/>
            <person name="Quan G."/>
            <person name="Ramirez L."/>
            <person name="Rash S."/>
            <person name="Retterer J."/>
            <person name="Rodriguez A."/>
            <person name="Rogers S."/>
            <person name="Salamov A."/>
            <person name="Salazar A."/>
            <person name="She X."/>
            <person name="Smith D."/>
            <person name="Slezak T."/>
            <person name="Solovyev V."/>
            <person name="Thayer N."/>
            <person name="Tice H."/>
            <person name="Tsai M."/>
            <person name="Ustaszewska A."/>
            <person name="Vo N."/>
            <person name="Wagner M."/>
            <person name="Wheeler J."/>
            <person name="Wu K."/>
            <person name="Xie G."/>
            <person name="Yang J."/>
            <person name="Dubchak I."/>
            <person name="Furey T.S."/>
            <person name="DeJong P."/>
            <person name="Dickson M."/>
            <person name="Gordon D."/>
            <person name="Eichler E.E."/>
            <person name="Pennacchio L.A."/>
            <person name="Richardson P."/>
            <person name="Stubbs L."/>
            <person name="Rokhsar D.S."/>
            <person name="Myers R.M."/>
            <person name="Rubin E.M."/>
            <person name="Lucas S.M."/>
        </authorList>
    </citation>
    <scope>NUCLEOTIDE SEQUENCE [LARGE SCALE GENOMIC DNA]</scope>
</reference>
<reference key="4">
    <citation type="submission" date="2005-07" db="EMBL/GenBank/DDBJ databases">
        <authorList>
            <person name="Mural R.J."/>
            <person name="Istrail S."/>
            <person name="Sutton G.G."/>
            <person name="Florea L."/>
            <person name="Halpern A.L."/>
            <person name="Mobarry C.M."/>
            <person name="Lippert R."/>
            <person name="Walenz B."/>
            <person name="Shatkay H."/>
            <person name="Dew I."/>
            <person name="Miller J.R."/>
            <person name="Flanigan M.J."/>
            <person name="Edwards N.J."/>
            <person name="Bolanos R."/>
            <person name="Fasulo D."/>
            <person name="Halldorsson B.V."/>
            <person name="Hannenhalli S."/>
            <person name="Turner R."/>
            <person name="Yooseph S."/>
            <person name="Lu F."/>
            <person name="Nusskern D.R."/>
            <person name="Shue B.C."/>
            <person name="Zheng X.H."/>
            <person name="Zhong F."/>
            <person name="Delcher A.L."/>
            <person name="Huson D.H."/>
            <person name="Kravitz S.A."/>
            <person name="Mouchard L."/>
            <person name="Reinert K."/>
            <person name="Remington K.A."/>
            <person name="Clark A.G."/>
            <person name="Waterman M.S."/>
            <person name="Eichler E.E."/>
            <person name="Adams M.D."/>
            <person name="Hunkapiller M.W."/>
            <person name="Myers E.W."/>
            <person name="Venter J.C."/>
        </authorList>
    </citation>
    <scope>NUCLEOTIDE SEQUENCE [LARGE SCALE GENOMIC DNA]</scope>
</reference>